<accession>A4VJD4</accession>
<dbReference type="EMBL" id="CP000304">
    <property type="protein sequence ID" value="ABP79085.1"/>
    <property type="molecule type" value="Genomic_DNA"/>
</dbReference>
<dbReference type="RefSeq" id="WP_011912566.1">
    <property type="nucleotide sequence ID" value="NC_009434.1"/>
</dbReference>
<dbReference type="SMR" id="A4VJD4"/>
<dbReference type="KEGG" id="psa:PST_1394"/>
<dbReference type="eggNOG" id="COG2063">
    <property type="taxonomic scope" value="Bacteria"/>
</dbReference>
<dbReference type="HOGENOM" id="CLU_069313_0_2_6"/>
<dbReference type="Proteomes" id="UP000000233">
    <property type="component" value="Chromosome"/>
</dbReference>
<dbReference type="GO" id="GO:0009427">
    <property type="term" value="C:bacterial-type flagellum basal body, distal rod, L ring"/>
    <property type="evidence" value="ECO:0007669"/>
    <property type="project" value="InterPro"/>
</dbReference>
<dbReference type="GO" id="GO:0009279">
    <property type="term" value="C:cell outer membrane"/>
    <property type="evidence" value="ECO:0007669"/>
    <property type="project" value="UniProtKB-SubCell"/>
</dbReference>
<dbReference type="GO" id="GO:0003774">
    <property type="term" value="F:cytoskeletal motor activity"/>
    <property type="evidence" value="ECO:0007669"/>
    <property type="project" value="InterPro"/>
</dbReference>
<dbReference type="GO" id="GO:0071973">
    <property type="term" value="P:bacterial-type flagellum-dependent cell motility"/>
    <property type="evidence" value="ECO:0007669"/>
    <property type="project" value="InterPro"/>
</dbReference>
<dbReference type="HAMAP" id="MF_00415">
    <property type="entry name" value="FlgH"/>
    <property type="match status" value="1"/>
</dbReference>
<dbReference type="InterPro" id="IPR000527">
    <property type="entry name" value="Flag_Lring"/>
</dbReference>
<dbReference type="NCBIfam" id="NF001304">
    <property type="entry name" value="PRK00249.1-4"/>
    <property type="match status" value="1"/>
</dbReference>
<dbReference type="PANTHER" id="PTHR34933">
    <property type="entry name" value="FLAGELLAR L-RING PROTEIN"/>
    <property type="match status" value="1"/>
</dbReference>
<dbReference type="PANTHER" id="PTHR34933:SF1">
    <property type="entry name" value="FLAGELLAR L-RING PROTEIN"/>
    <property type="match status" value="1"/>
</dbReference>
<dbReference type="Pfam" id="PF02107">
    <property type="entry name" value="FlgH"/>
    <property type="match status" value="1"/>
</dbReference>
<dbReference type="PRINTS" id="PR01008">
    <property type="entry name" value="FLGLRINGFLGH"/>
</dbReference>
<dbReference type="PROSITE" id="PS51257">
    <property type="entry name" value="PROKAR_LIPOPROTEIN"/>
    <property type="match status" value="1"/>
</dbReference>
<name>FLGH_STUS1</name>
<gene>
    <name evidence="1" type="primary">flgH</name>
    <name type="ordered locus">PST_1394</name>
</gene>
<organism>
    <name type="scientific">Stutzerimonas stutzeri (strain A1501)</name>
    <name type="common">Pseudomonas stutzeri</name>
    <dbReference type="NCBI Taxonomy" id="379731"/>
    <lineage>
        <taxon>Bacteria</taxon>
        <taxon>Pseudomonadati</taxon>
        <taxon>Pseudomonadota</taxon>
        <taxon>Gammaproteobacteria</taxon>
        <taxon>Pseudomonadales</taxon>
        <taxon>Pseudomonadaceae</taxon>
        <taxon>Stutzerimonas</taxon>
    </lineage>
</organism>
<protein>
    <recommendedName>
        <fullName evidence="1">Flagellar L-ring protein</fullName>
    </recommendedName>
    <alternativeName>
        <fullName evidence="1">Basal body L-ring protein</fullName>
    </alternativeName>
</protein>
<proteinExistence type="inferred from homology"/>
<comment type="function">
    <text evidence="1">Assembles around the rod to form the L-ring and probably protects the motor/basal body from shearing forces during rotation.</text>
</comment>
<comment type="subunit">
    <text evidence="1">The basal body constitutes a major portion of the flagellar organelle and consists of four rings (L,P,S, and M) mounted on a central rod.</text>
</comment>
<comment type="subcellular location">
    <subcellularLocation>
        <location evidence="1">Cell outer membrane</location>
        <topology evidence="1">Lipid-anchor</topology>
    </subcellularLocation>
    <subcellularLocation>
        <location evidence="1">Bacterial flagellum basal body</location>
    </subcellularLocation>
</comment>
<comment type="similarity">
    <text evidence="1">Belongs to the FlgH family.</text>
</comment>
<keyword id="KW-0975">Bacterial flagellum</keyword>
<keyword id="KW-0998">Cell outer membrane</keyword>
<keyword id="KW-0449">Lipoprotein</keyword>
<keyword id="KW-0472">Membrane</keyword>
<keyword id="KW-0564">Palmitate</keyword>
<keyword id="KW-1185">Reference proteome</keyword>
<keyword id="KW-0732">Signal</keyword>
<feature type="signal peptide" evidence="1">
    <location>
        <begin position="1"/>
        <end position="18"/>
    </location>
</feature>
<feature type="chain" id="PRO_1000050096" description="Flagellar L-ring protein">
    <location>
        <begin position="19"/>
        <end position="231"/>
    </location>
</feature>
<feature type="lipid moiety-binding region" description="N-palmitoyl cysteine" evidence="1">
    <location>
        <position position="19"/>
    </location>
</feature>
<feature type="lipid moiety-binding region" description="S-diacylglycerol cysteine" evidence="1">
    <location>
        <position position="19"/>
    </location>
</feature>
<reference key="1">
    <citation type="journal article" date="2008" name="Proc. Natl. Acad. Sci. U.S.A.">
        <title>Nitrogen fixation island and rhizosphere competence traits in the genome of root-associated Pseudomonas stutzeri A1501.</title>
        <authorList>
            <person name="Yan Y."/>
            <person name="Yang J."/>
            <person name="Dou Y."/>
            <person name="Chen M."/>
            <person name="Ping S."/>
            <person name="Peng J."/>
            <person name="Lu W."/>
            <person name="Zhang W."/>
            <person name="Yao Z."/>
            <person name="Li H."/>
            <person name="Liu W."/>
            <person name="He S."/>
            <person name="Geng L."/>
            <person name="Zhang X."/>
            <person name="Yang F."/>
            <person name="Yu H."/>
            <person name="Zhan Y."/>
            <person name="Li D."/>
            <person name="Lin Z."/>
            <person name="Wang Y."/>
            <person name="Elmerich C."/>
            <person name="Lin M."/>
            <person name="Jin Q."/>
        </authorList>
    </citation>
    <scope>NUCLEOTIDE SEQUENCE [LARGE SCALE GENOMIC DNA]</scope>
    <source>
        <strain>A1501</strain>
    </source>
</reference>
<sequence>MSRLLIVVSLSSAFALAGCVAPAPKPNDPYYAPVLPRTPLPAAQNSGAIYQAGFETYLYDDRKAYRVGDIITITLAERTQASKNASSSISKDSSANIGLGSLFGGAVSMANPLTGNSMSLGAEYDASRDTSGSGQAGQSNSLSGSITVTVSEVLPNGILAVRGEKWMTLNTGDELVRIAGLVRQDDIATDNTVSSTRIADARITYSGTGAFADASQPGWLDRFFMSPLWPF</sequence>
<evidence type="ECO:0000255" key="1">
    <source>
        <dbReference type="HAMAP-Rule" id="MF_00415"/>
    </source>
</evidence>